<evidence type="ECO:0000250" key="1"/>
<evidence type="ECO:0000305" key="2"/>
<dbReference type="EC" id="2.7.4.8"/>
<dbReference type="EMBL" id="AE001273">
    <property type="protein sequence ID" value="AAC67620.1"/>
    <property type="molecule type" value="Genomic_DNA"/>
</dbReference>
<dbReference type="PIR" id="A71567">
    <property type="entry name" value="A71567"/>
</dbReference>
<dbReference type="RefSeq" id="NP_219532.1">
    <property type="nucleotide sequence ID" value="NC_000117.1"/>
</dbReference>
<dbReference type="RefSeq" id="WP_009871377.1">
    <property type="nucleotide sequence ID" value="NC_000117.1"/>
</dbReference>
<dbReference type="SMR" id="O84033"/>
<dbReference type="FunCoup" id="O84033">
    <property type="interactions" value="223"/>
</dbReference>
<dbReference type="STRING" id="272561.CT_030"/>
<dbReference type="EnsemblBacteria" id="AAC67620">
    <property type="protein sequence ID" value="AAC67620"/>
    <property type="gene ID" value="CT_030"/>
</dbReference>
<dbReference type="GeneID" id="884151"/>
<dbReference type="KEGG" id="ctr:CT_030"/>
<dbReference type="PATRIC" id="fig|272561.5.peg.35"/>
<dbReference type="HOGENOM" id="CLU_001715_1_1_0"/>
<dbReference type="InParanoid" id="O84033"/>
<dbReference type="OrthoDB" id="9808150at2"/>
<dbReference type="Proteomes" id="UP000000431">
    <property type="component" value="Chromosome"/>
</dbReference>
<dbReference type="GO" id="GO:0005829">
    <property type="term" value="C:cytosol"/>
    <property type="evidence" value="ECO:0000318"/>
    <property type="project" value="GO_Central"/>
</dbReference>
<dbReference type="GO" id="GO:0005524">
    <property type="term" value="F:ATP binding"/>
    <property type="evidence" value="ECO:0007669"/>
    <property type="project" value="UniProtKB-UniRule"/>
</dbReference>
<dbReference type="GO" id="GO:0004385">
    <property type="term" value="F:guanylate kinase activity"/>
    <property type="evidence" value="ECO:0000318"/>
    <property type="project" value="GO_Central"/>
</dbReference>
<dbReference type="CDD" id="cd00071">
    <property type="entry name" value="GMPK"/>
    <property type="match status" value="1"/>
</dbReference>
<dbReference type="FunFam" id="3.30.63.10:FF:000005">
    <property type="entry name" value="Guanylate kinase"/>
    <property type="match status" value="1"/>
</dbReference>
<dbReference type="Gene3D" id="3.30.63.10">
    <property type="entry name" value="Guanylate Kinase phosphate binding domain"/>
    <property type="match status" value="1"/>
</dbReference>
<dbReference type="Gene3D" id="3.40.50.300">
    <property type="entry name" value="P-loop containing nucleotide triphosphate hydrolases"/>
    <property type="match status" value="1"/>
</dbReference>
<dbReference type="HAMAP" id="MF_00328">
    <property type="entry name" value="Guanylate_kinase"/>
    <property type="match status" value="1"/>
</dbReference>
<dbReference type="InterPro" id="IPR008145">
    <property type="entry name" value="GK/Ca_channel_bsu"/>
</dbReference>
<dbReference type="InterPro" id="IPR008144">
    <property type="entry name" value="Guanylate_kin-like_dom"/>
</dbReference>
<dbReference type="InterPro" id="IPR017665">
    <property type="entry name" value="Guanylate_kinase"/>
</dbReference>
<dbReference type="InterPro" id="IPR020590">
    <property type="entry name" value="Guanylate_kinase_CS"/>
</dbReference>
<dbReference type="InterPro" id="IPR027417">
    <property type="entry name" value="P-loop_NTPase"/>
</dbReference>
<dbReference type="NCBIfam" id="TIGR03263">
    <property type="entry name" value="guanyl_kin"/>
    <property type="match status" value="1"/>
</dbReference>
<dbReference type="PANTHER" id="PTHR23117:SF13">
    <property type="entry name" value="GUANYLATE KINASE"/>
    <property type="match status" value="1"/>
</dbReference>
<dbReference type="PANTHER" id="PTHR23117">
    <property type="entry name" value="GUANYLATE KINASE-RELATED"/>
    <property type="match status" value="1"/>
</dbReference>
<dbReference type="Pfam" id="PF00625">
    <property type="entry name" value="Guanylate_kin"/>
    <property type="match status" value="1"/>
</dbReference>
<dbReference type="SMART" id="SM00072">
    <property type="entry name" value="GuKc"/>
    <property type="match status" value="1"/>
</dbReference>
<dbReference type="SUPFAM" id="SSF52540">
    <property type="entry name" value="P-loop containing nucleoside triphosphate hydrolases"/>
    <property type="match status" value="1"/>
</dbReference>
<dbReference type="PROSITE" id="PS00856">
    <property type="entry name" value="GUANYLATE_KINASE_1"/>
    <property type="match status" value="1"/>
</dbReference>
<dbReference type="PROSITE" id="PS50052">
    <property type="entry name" value="GUANYLATE_KINASE_2"/>
    <property type="match status" value="1"/>
</dbReference>
<accession>O84033</accession>
<name>KGUA_CHLTR</name>
<sequence>MSVKVISPFSQDGVQCFPKLFIISAPAGAGKTTLTHMLQREFPDAFEKTVSSTTRSARPGEVHGVDYLFVSEDDFKQSLDREDFLEWVFLFGTYYGTSKAEISRVLQKGKHCIAVIDVQGALALKKQMPAVTIFIQAPSQEELERRLNARDSEKDFQKKERLEHSAVEIAAASEFDYVVVNDDLITAYQVLRSIFIAEEHRMSHG</sequence>
<reference key="1">
    <citation type="journal article" date="1998" name="Science">
        <title>Genome sequence of an obligate intracellular pathogen of humans: Chlamydia trachomatis.</title>
        <authorList>
            <person name="Stephens R.S."/>
            <person name="Kalman S."/>
            <person name="Lammel C.J."/>
            <person name="Fan J."/>
            <person name="Marathe R."/>
            <person name="Aravind L."/>
            <person name="Mitchell W.P."/>
            <person name="Olinger L."/>
            <person name="Tatusov R.L."/>
            <person name="Zhao Q."/>
            <person name="Koonin E.V."/>
            <person name="Davis R.W."/>
        </authorList>
    </citation>
    <scope>NUCLEOTIDE SEQUENCE [LARGE SCALE GENOMIC DNA]</scope>
    <source>
        <strain>ATCC VR-885 / DSM 19411 / UW-3/Cx</strain>
    </source>
</reference>
<feature type="chain" id="PRO_0000170522" description="Guanylate kinase">
    <location>
        <begin position="1"/>
        <end position="205"/>
    </location>
</feature>
<feature type="domain" description="Guanylate kinase-like">
    <location>
        <begin position="18"/>
        <end position="196"/>
    </location>
</feature>
<feature type="binding site" evidence="1">
    <location>
        <begin position="25"/>
        <end position="32"/>
    </location>
    <ligand>
        <name>ATP</name>
        <dbReference type="ChEBI" id="CHEBI:30616"/>
    </ligand>
</feature>
<proteinExistence type="inferred from homology"/>
<comment type="function">
    <text evidence="1">Essential for recycling GMP and indirectly, cGMP.</text>
</comment>
<comment type="catalytic activity">
    <reaction>
        <text>GMP + ATP = GDP + ADP</text>
        <dbReference type="Rhea" id="RHEA:20780"/>
        <dbReference type="ChEBI" id="CHEBI:30616"/>
        <dbReference type="ChEBI" id="CHEBI:58115"/>
        <dbReference type="ChEBI" id="CHEBI:58189"/>
        <dbReference type="ChEBI" id="CHEBI:456216"/>
        <dbReference type="EC" id="2.7.4.8"/>
    </reaction>
</comment>
<comment type="subcellular location">
    <subcellularLocation>
        <location evidence="1">Cytoplasm</location>
    </subcellularLocation>
</comment>
<comment type="similarity">
    <text evidence="2">Belongs to the guanylate kinase family.</text>
</comment>
<keyword id="KW-0067">ATP-binding</keyword>
<keyword id="KW-0963">Cytoplasm</keyword>
<keyword id="KW-0418">Kinase</keyword>
<keyword id="KW-0547">Nucleotide-binding</keyword>
<keyword id="KW-1185">Reference proteome</keyword>
<keyword id="KW-0808">Transferase</keyword>
<gene>
    <name type="primary">gmk</name>
    <name type="ordered locus">CT_030</name>
</gene>
<organism>
    <name type="scientific">Chlamydia trachomatis serovar D (strain ATCC VR-885 / DSM 19411 / UW-3/Cx)</name>
    <dbReference type="NCBI Taxonomy" id="272561"/>
    <lineage>
        <taxon>Bacteria</taxon>
        <taxon>Pseudomonadati</taxon>
        <taxon>Chlamydiota</taxon>
        <taxon>Chlamydiia</taxon>
        <taxon>Chlamydiales</taxon>
        <taxon>Chlamydiaceae</taxon>
        <taxon>Chlamydia/Chlamydophila group</taxon>
        <taxon>Chlamydia</taxon>
    </lineage>
</organism>
<protein>
    <recommendedName>
        <fullName>Guanylate kinase</fullName>
        <ecNumber>2.7.4.8</ecNumber>
    </recommendedName>
    <alternativeName>
        <fullName>GMP kinase</fullName>
    </alternativeName>
</protein>